<feature type="chain" id="PRO_0000430795" description="2-dehydro-3-deoxy-phosphogluconate aldolase">
    <location>
        <begin position="1"/>
        <end position="247"/>
    </location>
</feature>
<name>DGAF_SALT1</name>
<comment type="function">
    <text evidence="1">Involved in the catabolism of D-glucosaminate. Catalyzes the conversion of keto-3-deoxygluconate 6-phosphate (KDGP) to yield pyruvate and glyceraldehyde-3-phosphate.</text>
</comment>
<comment type="catalytic activity">
    <reaction evidence="1">
        <text>2-dehydro-3-deoxy-6-phospho-D-gluconate = D-glyceraldehyde 3-phosphate + pyruvate</text>
        <dbReference type="Rhea" id="RHEA:17089"/>
        <dbReference type="ChEBI" id="CHEBI:15361"/>
        <dbReference type="ChEBI" id="CHEBI:57569"/>
        <dbReference type="ChEBI" id="CHEBI:59776"/>
        <dbReference type="EC" id="4.1.2.14"/>
    </reaction>
</comment>
<comment type="induction">
    <text evidence="1">By D-glucosaminate and DgaR.</text>
</comment>
<comment type="disruption phenotype">
    <text evidence="1">Cells lacking this gene are able to grow with D-glucosaminate as the sole carbon source, although the growth rate is significantly lower.</text>
</comment>
<comment type="similarity">
    <text evidence="3">Belongs to the DagF family.</text>
</comment>
<proteinExistence type="evidence at protein level"/>
<protein>
    <recommendedName>
        <fullName evidence="2">2-dehydro-3-deoxy-phosphogluconate aldolase</fullName>
        <ecNumber evidence="1">4.1.2.14</ecNumber>
    </recommendedName>
    <alternativeName>
        <fullName evidence="2">Keto-3-deoxygluconate 6-phosphate aldolase</fullName>
        <shortName evidence="2">KDGP aldolase</shortName>
    </alternativeName>
</protein>
<evidence type="ECO:0000269" key="1">
    <source>
    </source>
</evidence>
<evidence type="ECO:0000303" key="2">
    <source>
    </source>
</evidence>
<evidence type="ECO:0000305" key="3"/>
<reference key="1">
    <citation type="journal article" date="2010" name="J. Bacteriol.">
        <title>Short-term signatures of evolutionary change in the Salmonella enterica serovar typhimurium 14028 genome.</title>
        <authorList>
            <person name="Jarvik T."/>
            <person name="Smillie C."/>
            <person name="Groisman E.A."/>
            <person name="Ochman H."/>
        </authorList>
    </citation>
    <scope>NUCLEOTIDE SEQUENCE [LARGE SCALE GENOMIC DNA]</scope>
    <source>
        <strain>14028s / SGSC 2262</strain>
    </source>
</reference>
<reference key="2">
    <citation type="journal article" date="2013" name="J. Bacteriol.">
        <title>Salmonella utilizes D-glucosaminate via a mannose family phosphotransferase system permease and associated enzymes.</title>
        <authorList>
            <person name="Miller K.A."/>
            <person name="Phillips R.S."/>
            <person name="Mrazek J."/>
            <person name="Hoover T.R."/>
        </authorList>
    </citation>
    <scope>FUNCTION</scope>
    <scope>CATALYTIC ACTIVITY</scope>
    <scope>DISRUPTION PHENOTYPE</scope>
    <scope>INDUCTION</scope>
</reference>
<organism>
    <name type="scientific">Salmonella typhimurium (strain 14028s / SGSC 2262)</name>
    <dbReference type="NCBI Taxonomy" id="588858"/>
    <lineage>
        <taxon>Bacteria</taxon>
        <taxon>Pseudomonadati</taxon>
        <taxon>Pseudomonadota</taxon>
        <taxon>Gammaproteobacteria</taxon>
        <taxon>Enterobacterales</taxon>
        <taxon>Enterobacteriaceae</taxon>
        <taxon>Salmonella</taxon>
    </lineage>
</organism>
<sequence>MQQINFYRQRVAINVLAKDIANAKAIYEAAEGHAVIGVLSAQFATVEEGVPEVKRWMAEVPSISVGLGAGDPAQYYKAAMIAAHTHPAHVNQTFTGSGFAAGALAATGGEQTHINALVSPTGTPGEVVISTGVSSSQGTPARVSCEAAVRMMQDMGAHAAKFFPMGGEKSLPELYALATTAARHGMTLIEPTGGISLDNFGIILQTCLEAGVPRVMPHVYSSIIDPQTGNTRPEDIIRLMEIVKALV</sequence>
<keyword id="KW-0456">Lyase</keyword>
<dbReference type="EC" id="4.1.2.14" evidence="1"/>
<dbReference type="EMBL" id="CP001363">
    <property type="protein sequence ID" value="ACY90924.1"/>
    <property type="molecule type" value="Genomic_DNA"/>
</dbReference>
<dbReference type="SMR" id="D0ZLR2"/>
<dbReference type="KEGG" id="seo:STM14_4543"/>
<dbReference type="PATRIC" id="fig|588858.6.peg.4141"/>
<dbReference type="HOGENOM" id="CLU_098610_0_0_6"/>
<dbReference type="BioCyc" id="MetaCyc:MONOMER-18125"/>
<dbReference type="BioCyc" id="SENT588858:STM14_RS19900-MONOMER"/>
<dbReference type="Proteomes" id="UP000002695">
    <property type="component" value="Chromosome"/>
</dbReference>
<dbReference type="GO" id="GO:0008675">
    <property type="term" value="F:2-dehydro-3-deoxy-phosphogluconate aldolase activity"/>
    <property type="evidence" value="ECO:0007669"/>
    <property type="project" value="UniProtKB-EC"/>
</dbReference>
<dbReference type="Gene3D" id="3.20.20.70">
    <property type="entry name" value="Aldolase class I"/>
    <property type="match status" value="1"/>
</dbReference>
<dbReference type="InterPro" id="IPR013785">
    <property type="entry name" value="Aldolase_TIM"/>
</dbReference>
<dbReference type="InterPro" id="IPR010763">
    <property type="entry name" value="DgaF"/>
</dbReference>
<dbReference type="NCBIfam" id="NF047796">
    <property type="entry name" value="DhDoxPGlucAldDagF"/>
    <property type="match status" value="1"/>
</dbReference>
<dbReference type="NCBIfam" id="TIGR03581">
    <property type="entry name" value="EF_0839"/>
    <property type="match status" value="1"/>
</dbReference>
<dbReference type="Pfam" id="PF07071">
    <property type="entry name" value="KDGP_aldolase"/>
    <property type="match status" value="1"/>
</dbReference>
<gene>
    <name evidence="2" type="primary">dgaF</name>
    <name type="ordered locus">STM14_4543</name>
</gene>
<accession>D0ZLR2</accession>